<proteinExistence type="inferred from homology"/>
<comment type="catalytic activity">
    <reaction evidence="1">
        <text>sn-glycerol 3-phosphate + an acyl-CoA = a 1-acyl-sn-glycero-3-phosphate + CoA</text>
        <dbReference type="Rhea" id="RHEA:15325"/>
        <dbReference type="ChEBI" id="CHEBI:57287"/>
        <dbReference type="ChEBI" id="CHEBI:57597"/>
        <dbReference type="ChEBI" id="CHEBI:57970"/>
        <dbReference type="ChEBI" id="CHEBI:58342"/>
        <dbReference type="EC" id="2.3.1.15"/>
    </reaction>
</comment>
<comment type="pathway">
    <text evidence="1">Phospholipid metabolism; CDP-diacylglycerol biosynthesis; CDP-diacylglycerol from sn-glycerol 3-phosphate: step 1/3.</text>
</comment>
<comment type="subcellular location">
    <subcellularLocation>
        <location evidence="1">Cell membrane</location>
        <topology evidence="1">Peripheral membrane protein</topology>
        <orientation evidence="1">Cytoplasmic side</orientation>
    </subcellularLocation>
</comment>
<comment type="domain">
    <text evidence="1">The HXXXXD motif is essential for acyltransferase activity and may constitute the binding site for the phosphate moiety of the glycerol-3-phosphate.</text>
</comment>
<comment type="similarity">
    <text evidence="1">Belongs to the GPAT/DAPAT family.</text>
</comment>
<name>PLSB_MYCMM</name>
<feature type="chain" id="PRO_1000123085" description="Glycerol-3-phosphate acyltransferase">
    <location>
        <begin position="1"/>
        <end position="788"/>
    </location>
</feature>
<feature type="region of interest" description="Disordered" evidence="2">
    <location>
        <begin position="104"/>
        <end position="135"/>
    </location>
</feature>
<feature type="short sequence motif" description="HXXXXD motif">
    <location>
        <begin position="271"/>
        <end position="276"/>
    </location>
</feature>
<dbReference type="EC" id="2.3.1.15" evidence="1"/>
<dbReference type="EMBL" id="CP000854">
    <property type="protein sequence ID" value="ACC42243.1"/>
    <property type="molecule type" value="Genomic_DNA"/>
</dbReference>
<dbReference type="RefSeq" id="WP_012395433.1">
    <property type="nucleotide sequence ID" value="NC_010612.1"/>
</dbReference>
<dbReference type="SMR" id="B2HNJ0"/>
<dbReference type="STRING" id="216594.MMAR_3833"/>
<dbReference type="KEGG" id="mmi:MMAR_3833"/>
<dbReference type="eggNOG" id="COG2937">
    <property type="taxonomic scope" value="Bacteria"/>
</dbReference>
<dbReference type="HOGENOM" id="CLU_015407_1_0_11"/>
<dbReference type="OrthoDB" id="335193at2"/>
<dbReference type="UniPathway" id="UPA00557">
    <property type="reaction ID" value="UER00612"/>
</dbReference>
<dbReference type="Proteomes" id="UP000001190">
    <property type="component" value="Chromosome"/>
</dbReference>
<dbReference type="GO" id="GO:0005886">
    <property type="term" value="C:plasma membrane"/>
    <property type="evidence" value="ECO:0007669"/>
    <property type="project" value="UniProtKB-SubCell"/>
</dbReference>
<dbReference type="GO" id="GO:0004366">
    <property type="term" value="F:glycerol-3-phosphate O-acyltransferase activity"/>
    <property type="evidence" value="ECO:0007669"/>
    <property type="project" value="UniProtKB-UniRule"/>
</dbReference>
<dbReference type="GO" id="GO:0016024">
    <property type="term" value="P:CDP-diacylglycerol biosynthetic process"/>
    <property type="evidence" value="ECO:0007669"/>
    <property type="project" value="UniProtKB-UniRule"/>
</dbReference>
<dbReference type="CDD" id="cd07993">
    <property type="entry name" value="LPLAT_DHAPAT-like"/>
    <property type="match status" value="1"/>
</dbReference>
<dbReference type="HAMAP" id="MF_00393">
    <property type="entry name" value="Glyc3P_acyltrans"/>
    <property type="match status" value="1"/>
</dbReference>
<dbReference type="InterPro" id="IPR022284">
    <property type="entry name" value="GPAT/DHAPAT"/>
</dbReference>
<dbReference type="InterPro" id="IPR045520">
    <property type="entry name" value="GPAT/DHAPAT_C"/>
</dbReference>
<dbReference type="InterPro" id="IPR041728">
    <property type="entry name" value="GPAT/DHAPAT_LPLAT"/>
</dbReference>
<dbReference type="InterPro" id="IPR028354">
    <property type="entry name" value="GPAT_PlsB"/>
</dbReference>
<dbReference type="InterPro" id="IPR002123">
    <property type="entry name" value="Plipid/glycerol_acylTrfase"/>
</dbReference>
<dbReference type="NCBIfam" id="NF002886">
    <property type="entry name" value="PRK03355.1"/>
    <property type="match status" value="1"/>
</dbReference>
<dbReference type="PANTHER" id="PTHR12563:SF17">
    <property type="entry name" value="DIHYDROXYACETONE PHOSPHATE ACYLTRANSFERASE"/>
    <property type="match status" value="1"/>
</dbReference>
<dbReference type="PANTHER" id="PTHR12563">
    <property type="entry name" value="GLYCEROL-3-PHOSPHATE ACYLTRANSFERASE"/>
    <property type="match status" value="1"/>
</dbReference>
<dbReference type="Pfam" id="PF01553">
    <property type="entry name" value="Acyltransferase"/>
    <property type="match status" value="1"/>
</dbReference>
<dbReference type="Pfam" id="PF19277">
    <property type="entry name" value="GPAT_C"/>
    <property type="match status" value="1"/>
</dbReference>
<dbReference type="PIRSF" id="PIRSF500064">
    <property type="entry name" value="GPAT"/>
    <property type="match status" value="1"/>
</dbReference>
<dbReference type="PIRSF" id="PIRSF000437">
    <property type="entry name" value="GPAT_DHAPAT"/>
    <property type="match status" value="1"/>
</dbReference>
<dbReference type="SMART" id="SM00563">
    <property type="entry name" value="PlsC"/>
    <property type="match status" value="1"/>
</dbReference>
<dbReference type="SUPFAM" id="SSF69593">
    <property type="entry name" value="Glycerol-3-phosphate (1)-acyltransferase"/>
    <property type="match status" value="1"/>
</dbReference>
<gene>
    <name evidence="1" type="primary">plsB</name>
    <name type="ordered locus">MMAR_3833</name>
</gene>
<reference key="1">
    <citation type="journal article" date="2008" name="Genome Res.">
        <title>Insights from the complete genome sequence of Mycobacterium marinum on the evolution of Mycobacterium tuberculosis.</title>
        <authorList>
            <person name="Stinear T.P."/>
            <person name="Seemann T."/>
            <person name="Harrison P.F."/>
            <person name="Jenkin G.A."/>
            <person name="Davies J.K."/>
            <person name="Johnson P.D."/>
            <person name="Abdellah Z."/>
            <person name="Arrowsmith C."/>
            <person name="Chillingworth T."/>
            <person name="Churcher C."/>
            <person name="Clarke K."/>
            <person name="Cronin A."/>
            <person name="Davis P."/>
            <person name="Goodhead I."/>
            <person name="Holroyd N."/>
            <person name="Jagels K."/>
            <person name="Lord A."/>
            <person name="Moule S."/>
            <person name="Mungall K."/>
            <person name="Norbertczak H."/>
            <person name="Quail M.A."/>
            <person name="Rabbinowitsch E."/>
            <person name="Walker D."/>
            <person name="White B."/>
            <person name="Whitehead S."/>
            <person name="Small P.L."/>
            <person name="Brosch R."/>
            <person name="Ramakrishnan L."/>
            <person name="Fischbach M.A."/>
            <person name="Parkhill J."/>
            <person name="Cole S.T."/>
        </authorList>
    </citation>
    <scope>NUCLEOTIDE SEQUENCE [LARGE SCALE GENOMIC DNA]</scope>
    <source>
        <strain>ATCC BAA-535 / M</strain>
    </source>
</reference>
<keyword id="KW-0012">Acyltransferase</keyword>
<keyword id="KW-1003">Cell membrane</keyword>
<keyword id="KW-0444">Lipid biosynthesis</keyword>
<keyword id="KW-0443">Lipid metabolism</keyword>
<keyword id="KW-0472">Membrane</keyword>
<keyword id="KW-0594">Phospholipid biosynthesis</keyword>
<keyword id="KW-1208">Phospholipid metabolism</keyword>
<keyword id="KW-1185">Reference proteome</keyword>
<keyword id="KW-0808">Transferase</keyword>
<accession>B2HNJ0</accession>
<evidence type="ECO:0000255" key="1">
    <source>
        <dbReference type="HAMAP-Rule" id="MF_00393"/>
    </source>
</evidence>
<evidence type="ECO:0000256" key="2">
    <source>
        <dbReference type="SAM" id="MobiDB-lite"/>
    </source>
</evidence>
<protein>
    <recommendedName>
        <fullName evidence="1">Glycerol-3-phosphate acyltransferase</fullName>
        <shortName evidence="1">GPAT</shortName>
        <ecNumber evidence="1">2.3.1.15</ecNumber>
    </recommendedName>
</protein>
<organism>
    <name type="scientific">Mycobacterium marinum (strain ATCC BAA-535 / M)</name>
    <dbReference type="NCBI Taxonomy" id="216594"/>
    <lineage>
        <taxon>Bacteria</taxon>
        <taxon>Bacillati</taxon>
        <taxon>Actinomycetota</taxon>
        <taxon>Actinomycetes</taxon>
        <taxon>Mycobacteriales</taxon>
        <taxon>Mycobacteriaceae</taxon>
        <taxon>Mycobacterium</taxon>
        <taxon>Mycobacterium ulcerans group</taxon>
    </lineage>
</organism>
<sequence length="788" mass="88236">MTKPVADTSAVLTSEDTLVLASMGSPVEMQLIMDWLGEQRARTPGAKFDVLKLPPRNAPTAALTALVEQLESGSEAGADRSIVPVQVFWQPPADRSRLAKVAGLLPGRDPYHPNPRQQRRILRSDPQRARVMAGESATVSELRKQWRDNTVGEDQHDFAHFVARRAILALARAEYRILGPQYKSPRLVKPEMLASARFRAGLEKIPGATVEEAGKMLDELATGWSQASVDVFSVLGRLISRGFDPEFDYDEYQVAAMRTALEAHPAVLLFSHRSYIDGAVVPVAMQDNRLPPVHMFGGVNLSFGVMGPLMRRAGMIFIRRNIAGDPLYKYVLKEYVGYVVEKRFNLSWSIEGTRSRTGKMLPPKLGLMSYVADAYLDGRSDDILLQGVSICFDQLHEIAEYAAYARGAEKTPEGFSWLYNFIKAQGERNYGKIYVRFPEAVSMRQYLGVPHGPITHDLAAKRLALQKMSFEVAWRILRATPMTATGLVCALLLTARGTALTLGQLHHTLQDSLDYLERKQTPMSTSALRLRSREGVRAAVDALSNAHPVTRVDSGREPVWYIAPEDELAAAFYRNSVIHAFLETSIVELALAHARHAEGDRMAAFWDQVMRLRDLLKFDFYFADSAAFRANIAEEMAWHRDWESQVAAGGDQIDAILYAKRPLISDAMLRVFFEAYAIVADVLRDAPANIKQKDLTDLALGLGRQYVAQARVRSSEPVSTLLFATARQVVDDQHLIEPAPDLTERRSAFLAELRNILRDFDYVGKIARNRFVARELKARQERLEQQAQ</sequence>